<feature type="chain" id="PRO_0000103069" description="SsrA-binding protein">
    <location>
        <begin position="1"/>
        <end position="151"/>
    </location>
</feature>
<sequence length="151" mass="17238">MARKVIANNKKALFDFHILERLEAGIALSGSEVKAIRAGRVNLKDSFVKIIKGEAFLLNAHISYLETTNPHYKPDERRPRKLLLHRKQIDKLTGSVSTEGMTLVTLSIYFNERNRAKAEIALAKGKNLHDKRETLKKRILDREVKAALKEH</sequence>
<keyword id="KW-0963">Cytoplasm</keyword>
<keyword id="KW-1185">Reference proteome</keyword>
<keyword id="KW-0694">RNA-binding</keyword>
<comment type="function">
    <text evidence="1">Required for rescue of stalled ribosomes mediated by trans-translation. Binds to transfer-messenger RNA (tmRNA), required for stable association of tmRNA with ribosomes. tmRNA and SmpB together mimic tRNA shape, replacing the anticodon stem-loop with SmpB. tmRNA is encoded by the ssrA gene; the 2 termini fold to resemble tRNA(Ala) and it encodes a 'tag peptide', a short internal open reading frame. During trans-translation Ala-aminoacylated tmRNA acts like a tRNA, entering the A-site of stalled ribosomes, displacing the stalled mRNA. The ribosome then switches to translate the ORF on the tmRNA; the nascent peptide is terminated with the 'tag peptide' encoded by the tmRNA and targeted for degradation. The ribosome is freed to recommence translation, which seems to be the essential function of trans-translation.</text>
</comment>
<comment type="subcellular location">
    <subcellularLocation>
        <location evidence="1">Cytoplasm</location>
    </subcellularLocation>
    <text evidence="1">The tmRNA-SmpB complex associates with stalled 70S ribosomes.</text>
</comment>
<comment type="similarity">
    <text evidence="1">Belongs to the SmpB family.</text>
</comment>
<evidence type="ECO:0000255" key="1">
    <source>
        <dbReference type="HAMAP-Rule" id="MF_00023"/>
    </source>
</evidence>
<gene>
    <name evidence="1" type="primary">smpB</name>
    <name type="ordered locus">WS0883</name>
</gene>
<name>SSRP_WOLSU</name>
<dbReference type="EMBL" id="BX571659">
    <property type="protein sequence ID" value="CAE09989.1"/>
    <property type="molecule type" value="Genomic_DNA"/>
</dbReference>
<dbReference type="RefSeq" id="WP_011138786.1">
    <property type="nucleotide sequence ID" value="NC_005090.1"/>
</dbReference>
<dbReference type="SMR" id="Q7M9J0"/>
<dbReference type="STRING" id="273121.WS0883"/>
<dbReference type="KEGG" id="wsu:WS0883"/>
<dbReference type="eggNOG" id="COG0691">
    <property type="taxonomic scope" value="Bacteria"/>
</dbReference>
<dbReference type="HOGENOM" id="CLU_108953_3_1_7"/>
<dbReference type="Proteomes" id="UP000000422">
    <property type="component" value="Chromosome"/>
</dbReference>
<dbReference type="GO" id="GO:0005829">
    <property type="term" value="C:cytosol"/>
    <property type="evidence" value="ECO:0007669"/>
    <property type="project" value="TreeGrafter"/>
</dbReference>
<dbReference type="GO" id="GO:0003723">
    <property type="term" value="F:RNA binding"/>
    <property type="evidence" value="ECO:0007669"/>
    <property type="project" value="UniProtKB-UniRule"/>
</dbReference>
<dbReference type="GO" id="GO:0070929">
    <property type="term" value="P:trans-translation"/>
    <property type="evidence" value="ECO:0007669"/>
    <property type="project" value="UniProtKB-UniRule"/>
</dbReference>
<dbReference type="CDD" id="cd09294">
    <property type="entry name" value="SmpB"/>
    <property type="match status" value="1"/>
</dbReference>
<dbReference type="Gene3D" id="2.40.280.10">
    <property type="match status" value="1"/>
</dbReference>
<dbReference type="HAMAP" id="MF_00023">
    <property type="entry name" value="SmpB"/>
    <property type="match status" value="1"/>
</dbReference>
<dbReference type="InterPro" id="IPR023620">
    <property type="entry name" value="SmpB"/>
</dbReference>
<dbReference type="InterPro" id="IPR000037">
    <property type="entry name" value="SsrA-bd_prot"/>
</dbReference>
<dbReference type="InterPro" id="IPR020081">
    <property type="entry name" value="SsrA-bd_prot_CS"/>
</dbReference>
<dbReference type="NCBIfam" id="NF003843">
    <property type="entry name" value="PRK05422.1"/>
    <property type="match status" value="1"/>
</dbReference>
<dbReference type="NCBIfam" id="TIGR00086">
    <property type="entry name" value="smpB"/>
    <property type="match status" value="1"/>
</dbReference>
<dbReference type="PANTHER" id="PTHR30308:SF2">
    <property type="entry name" value="SSRA-BINDING PROTEIN"/>
    <property type="match status" value="1"/>
</dbReference>
<dbReference type="PANTHER" id="PTHR30308">
    <property type="entry name" value="TMRNA-BINDING COMPONENT OF TRANS-TRANSLATION TAGGING COMPLEX"/>
    <property type="match status" value="1"/>
</dbReference>
<dbReference type="Pfam" id="PF01668">
    <property type="entry name" value="SmpB"/>
    <property type="match status" value="1"/>
</dbReference>
<dbReference type="SUPFAM" id="SSF74982">
    <property type="entry name" value="Small protein B (SmpB)"/>
    <property type="match status" value="1"/>
</dbReference>
<dbReference type="PROSITE" id="PS01317">
    <property type="entry name" value="SSRP"/>
    <property type="match status" value="1"/>
</dbReference>
<proteinExistence type="inferred from homology"/>
<accession>Q7M9J0</accession>
<protein>
    <recommendedName>
        <fullName evidence="1">SsrA-binding protein</fullName>
    </recommendedName>
    <alternativeName>
        <fullName evidence="1">Small protein B</fullName>
    </alternativeName>
</protein>
<reference key="1">
    <citation type="journal article" date="2003" name="Proc. Natl. Acad. Sci. U.S.A.">
        <title>Complete genome sequence and analysis of Wolinella succinogenes.</title>
        <authorList>
            <person name="Baar C."/>
            <person name="Eppinger M."/>
            <person name="Raddatz G."/>
            <person name="Simon J."/>
            <person name="Lanz C."/>
            <person name="Klimmek O."/>
            <person name="Nandakumar R."/>
            <person name="Gross R."/>
            <person name="Rosinus A."/>
            <person name="Keller H."/>
            <person name="Jagtap P."/>
            <person name="Linke B."/>
            <person name="Meyer F."/>
            <person name="Lederer H."/>
            <person name="Schuster S.C."/>
        </authorList>
    </citation>
    <scope>NUCLEOTIDE SEQUENCE [LARGE SCALE GENOMIC DNA]</scope>
    <source>
        <strain>ATCC 29543 / DSM 1740 / CCUG 13145 / JCM 31913 / LMG 7466 / NCTC 11488 / FDC 602W</strain>
    </source>
</reference>
<organism>
    <name type="scientific">Wolinella succinogenes (strain ATCC 29543 / DSM 1740 / CCUG 13145 / JCM 31913 / LMG 7466 / NCTC 11488 / FDC 602W)</name>
    <name type="common">Vibrio succinogenes</name>
    <dbReference type="NCBI Taxonomy" id="273121"/>
    <lineage>
        <taxon>Bacteria</taxon>
        <taxon>Pseudomonadati</taxon>
        <taxon>Campylobacterota</taxon>
        <taxon>Epsilonproteobacteria</taxon>
        <taxon>Campylobacterales</taxon>
        <taxon>Helicobacteraceae</taxon>
        <taxon>Wolinella</taxon>
    </lineage>
</organism>